<gene>
    <name evidence="5" type="primary">Sycp2l</name>
</gene>
<proteinExistence type="evidence at transcript level"/>
<protein>
    <recommendedName>
        <fullName>Synaptonemal complex protein 2-like</fullName>
        <shortName>SCP-2-like</shortName>
    </recommendedName>
</protein>
<name>SYC2L_MOUSE</name>
<dbReference type="EMBL" id="KP872825">
    <property type="protein sequence ID" value="ALE66119.1"/>
    <property type="molecule type" value="mRNA"/>
</dbReference>
<dbReference type="EMBL" id="AC158538">
    <property type="status" value="NOT_ANNOTATED_CDS"/>
    <property type="molecule type" value="Genomic_DNA"/>
</dbReference>
<dbReference type="CCDS" id="CCDS88444.1"/>
<dbReference type="RefSeq" id="NP_001311454.1">
    <property type="nucleotide sequence ID" value="NM_001324525.1"/>
</dbReference>
<dbReference type="SMR" id="A0A0M3U1B0"/>
<dbReference type="FunCoup" id="A0A0M3U1B0">
    <property type="interactions" value="266"/>
</dbReference>
<dbReference type="STRING" id="10090.ENSMUSP00000115127"/>
<dbReference type="iPTMnet" id="A0A0M3U1B0"/>
<dbReference type="PhosphoSitePlus" id="A0A0M3U1B0"/>
<dbReference type="PaxDb" id="10090-ENSMUSP00000115127"/>
<dbReference type="Antibodypedia" id="48559">
    <property type="antibodies" value="19 antibodies from 8 providers"/>
</dbReference>
<dbReference type="DNASU" id="637277"/>
<dbReference type="Ensembl" id="ENSMUST00000124093.3">
    <property type="protein sequence ID" value="ENSMUSP00000115127.3"/>
    <property type="gene ID" value="ENSMUSG00000038651.16"/>
</dbReference>
<dbReference type="GeneID" id="637277"/>
<dbReference type="KEGG" id="mmu:637277"/>
<dbReference type="AGR" id="MGI:2685114"/>
<dbReference type="CTD" id="221711"/>
<dbReference type="MGI" id="MGI:2685114">
    <property type="gene designation" value="Sycp2l"/>
</dbReference>
<dbReference type="VEuPathDB" id="HostDB:ENSMUSG00000038651"/>
<dbReference type="eggNOG" id="ENOG502QSX7">
    <property type="taxonomic scope" value="Eukaryota"/>
</dbReference>
<dbReference type="GeneTree" id="ENSGT00530000063859"/>
<dbReference type="InParanoid" id="A0A0M3U1B0"/>
<dbReference type="OMA" id="AKQAPDC"/>
<dbReference type="OrthoDB" id="10256849at2759"/>
<dbReference type="TreeFam" id="TF332368"/>
<dbReference type="BioGRID-ORCS" id="637277">
    <property type="hits" value="0 hits in 5 CRISPR screens"/>
</dbReference>
<dbReference type="ChiTaRS" id="Sycp2l">
    <property type="organism name" value="mouse"/>
</dbReference>
<dbReference type="PRO" id="PR:A0A0M3U1B0"/>
<dbReference type="Proteomes" id="UP000000589">
    <property type="component" value="Chromosome 13"/>
</dbReference>
<dbReference type="RNAct" id="A0A0M3U1B0">
    <property type="molecule type" value="protein"/>
</dbReference>
<dbReference type="Bgee" id="ENSMUSG00000038651">
    <property type="expression patterns" value="Expressed in animal zygote and 14 other cell types or tissues"/>
</dbReference>
<dbReference type="ExpressionAtlas" id="A0A0M3U1B0">
    <property type="expression patterns" value="baseline and differential"/>
</dbReference>
<dbReference type="GO" id="GO:0000779">
    <property type="term" value="C:condensed chromosome, centromeric region"/>
    <property type="evidence" value="ECO:0000314"/>
    <property type="project" value="MGI"/>
</dbReference>
<dbReference type="GO" id="GO:0001674">
    <property type="term" value="C:female germ cell nucleus"/>
    <property type="evidence" value="ECO:0000314"/>
    <property type="project" value="MGI"/>
</dbReference>
<dbReference type="GO" id="GO:0000800">
    <property type="term" value="C:lateral element"/>
    <property type="evidence" value="ECO:0000314"/>
    <property type="project" value="MGI"/>
</dbReference>
<dbReference type="GO" id="GO:0005654">
    <property type="term" value="C:nucleoplasm"/>
    <property type="evidence" value="ECO:0007669"/>
    <property type="project" value="Ensembl"/>
</dbReference>
<dbReference type="GO" id="GO:0043069">
    <property type="term" value="P:negative regulation of programmed cell death"/>
    <property type="evidence" value="ECO:0000315"/>
    <property type="project" value="MGI"/>
</dbReference>
<dbReference type="InterPro" id="IPR024835">
    <property type="entry name" value="SYCP2-like"/>
</dbReference>
<dbReference type="InterPro" id="IPR041322">
    <property type="entry name" value="SYCP2_ARLD"/>
</dbReference>
<dbReference type="InterPro" id="IPR040560">
    <property type="entry name" value="SYCP2_SLD"/>
</dbReference>
<dbReference type="PANTHER" id="PTHR15607:SF14">
    <property type="entry name" value="SYNAPTONEMAL COMPLEX PROTEIN 2-LIKE"/>
    <property type="match status" value="1"/>
</dbReference>
<dbReference type="PANTHER" id="PTHR15607">
    <property type="entry name" value="SYNAPTONEMAL COMPLEX PROTEIN-RELATED"/>
    <property type="match status" value="1"/>
</dbReference>
<dbReference type="Pfam" id="PF18581">
    <property type="entry name" value="SYCP2_ARLD"/>
    <property type="match status" value="1"/>
</dbReference>
<dbReference type="Pfam" id="PF18584">
    <property type="entry name" value="SYCP2_SLD"/>
    <property type="match status" value="1"/>
</dbReference>
<evidence type="ECO:0000250" key="1">
    <source>
        <dbReference type="UniProtKB" id="Q5T4T6"/>
    </source>
</evidence>
<evidence type="ECO:0000256" key="2">
    <source>
        <dbReference type="SAM" id="MobiDB-lite"/>
    </source>
</evidence>
<evidence type="ECO:0000269" key="3">
    <source>
    </source>
</evidence>
<evidence type="ECO:0000305" key="4"/>
<evidence type="ECO:0000312" key="5">
    <source>
        <dbReference type="MGI" id="MGI:2685114"/>
    </source>
</evidence>
<comment type="function">
    <text evidence="3">Oocyte-specific protein that localizes to centromeres at the dictyate stage and regulates the survival of primordial oocytes.</text>
</comment>
<comment type="subcellular location">
    <subcellularLocation>
        <location evidence="3">Nucleus</location>
    </subcellularLocation>
    <subcellularLocation>
        <location evidence="3">Chromosome</location>
        <location evidence="3">Centromere</location>
    </subcellularLocation>
    <text evidence="1 3">Localized to the synaptonemal complex lateral elements in late diplotene oocytes, while it is absent on the synaptonemal complex of leptotene, zygotene, pachytene and early diplotene oocytes (PubMed:26362258). Localizes to centromeres in dictyate oocytes (PubMed:26362258). Detected in nuclear granules and sizable aggregates (By similarity).</text>
</comment>
<comment type="tissue specificity">
    <text evidence="3">Specifically expressed in oocytes.</text>
</comment>
<comment type="disruption phenotype">
    <text evidence="3">Reduced fertility in females: acceleration of the age-associated decline of fertility in female mice, due to progressive loss of oocytes. Males are normal and fertile.</text>
</comment>
<comment type="similarity">
    <text evidence="4">Belongs to the SYCP2 family.</text>
</comment>
<reference key="1">
    <citation type="journal article" date="2015" name="Hum. Mol. Genet.">
        <title>Accelerated reproductive aging in females lacking a novel centromere protein SYCP2L.</title>
        <authorList>
            <person name="Zhou J."/>
            <person name="Stein P."/>
            <person name="Leu N.A."/>
            <person name="Chmatal L."/>
            <person name="Xue J."/>
            <person name="Ma J."/>
            <person name="Huang X."/>
            <person name="Lampson M.A."/>
            <person name="Schultz R.M."/>
            <person name="Wang P.J."/>
        </authorList>
    </citation>
    <scope>NUCLEOTIDE SEQUENCE [MRNA]</scope>
    <scope>FUNCTION</scope>
    <scope>SUBCELLULAR LOCATION</scope>
    <scope>TISSUE SPECIFICITY</scope>
    <scope>DISRUPTION PHENOTYPE</scope>
    <source>
        <strain>C57BL/6J</strain>
    </source>
</reference>
<reference key="2">
    <citation type="journal article" date="2009" name="PLoS Biol.">
        <title>Lineage-specific biology revealed by a finished genome assembly of the mouse.</title>
        <authorList>
            <person name="Church D.M."/>
            <person name="Goodstadt L."/>
            <person name="Hillier L.W."/>
            <person name="Zody M.C."/>
            <person name="Goldstein S."/>
            <person name="She X."/>
            <person name="Bult C.J."/>
            <person name="Agarwala R."/>
            <person name="Cherry J.L."/>
            <person name="DiCuccio M."/>
            <person name="Hlavina W."/>
            <person name="Kapustin Y."/>
            <person name="Meric P."/>
            <person name="Maglott D."/>
            <person name="Birtle Z."/>
            <person name="Marques A.C."/>
            <person name="Graves T."/>
            <person name="Zhou S."/>
            <person name="Teague B."/>
            <person name="Potamousis K."/>
            <person name="Churas C."/>
            <person name="Place M."/>
            <person name="Herschleb J."/>
            <person name="Runnheim R."/>
            <person name="Forrest D."/>
            <person name="Amos-Landgraf J."/>
            <person name="Schwartz D.C."/>
            <person name="Cheng Z."/>
            <person name="Lindblad-Toh K."/>
            <person name="Eichler E.E."/>
            <person name="Ponting C.P."/>
        </authorList>
    </citation>
    <scope>NUCLEOTIDE SEQUENCE [LARGE SCALE GENOMIC DNA]</scope>
    <source>
        <strain>C57BL/6J</strain>
    </source>
</reference>
<accession>A0A0M3U1B0</accession>
<accession>D3YWV8</accession>
<accession>F6RWL8</accession>
<accession>F6ZC70</accession>
<feature type="chain" id="PRO_0000441742" description="Synaptonemal complex protein 2-like">
    <location>
        <begin position="1"/>
        <end position="842"/>
    </location>
</feature>
<feature type="region of interest" description="Disordered" evidence="2">
    <location>
        <begin position="451"/>
        <end position="473"/>
    </location>
</feature>
<feature type="region of interest" description="Disordered" evidence="2">
    <location>
        <begin position="505"/>
        <end position="560"/>
    </location>
</feature>
<feature type="region of interest" description="Disordered" evidence="2">
    <location>
        <begin position="619"/>
        <end position="666"/>
    </location>
</feature>
<feature type="region of interest" description="Disordered" evidence="2">
    <location>
        <begin position="715"/>
        <end position="738"/>
    </location>
</feature>
<feature type="compositionally biased region" description="Basic and acidic residues" evidence="2">
    <location>
        <begin position="458"/>
        <end position="470"/>
    </location>
</feature>
<feature type="compositionally biased region" description="Basic and acidic residues" evidence="2">
    <location>
        <begin position="505"/>
        <end position="525"/>
    </location>
</feature>
<feature type="compositionally biased region" description="Basic residues" evidence="2">
    <location>
        <begin position="543"/>
        <end position="559"/>
    </location>
</feature>
<feature type="compositionally biased region" description="Basic and acidic residues" evidence="2">
    <location>
        <begin position="624"/>
        <end position="633"/>
    </location>
</feature>
<feature type="compositionally biased region" description="Basic and acidic residues" evidence="2">
    <location>
        <begin position="643"/>
        <end position="655"/>
    </location>
</feature>
<keyword id="KW-0137">Centromere</keyword>
<keyword id="KW-0158">Chromosome</keyword>
<keyword id="KW-0539">Nucleus</keyword>
<keyword id="KW-1185">Reference proteome</keyword>
<organism>
    <name type="scientific">Mus musculus</name>
    <name type="common">Mouse</name>
    <dbReference type="NCBI Taxonomy" id="10090"/>
    <lineage>
        <taxon>Eukaryota</taxon>
        <taxon>Metazoa</taxon>
        <taxon>Chordata</taxon>
        <taxon>Craniata</taxon>
        <taxon>Vertebrata</taxon>
        <taxon>Euteleostomi</taxon>
        <taxon>Mammalia</taxon>
        <taxon>Eutheria</taxon>
        <taxon>Euarchontoglires</taxon>
        <taxon>Glires</taxon>
        <taxon>Rodentia</taxon>
        <taxon>Myomorpha</taxon>
        <taxon>Muroidea</taxon>
        <taxon>Muridae</taxon>
        <taxon>Murinae</taxon>
        <taxon>Mus</taxon>
        <taxon>Mus</taxon>
    </lineage>
</organism>
<sequence length="842" mass="96055">MSTLQSLIIDGFHGNGFHMIEEYLQQKESHVPQKYNHLLLHHLDRLIKEELDKNEFQNCSLLLKCIQRFFRDDPDHEEPLLIQQGLIPKMVSWFEIITGLLITKVLASEALLTNALEDFLDTALIISRHSRKATVQMLDSFILRLGFLVAEDSVKPSIQQETLATLNCILNAAPQEERRKLSSAEGACCLMKELARTILTVGDYSQQVALSEALCRMSVGRQRNDLAMQWFENTALAEAFKKIKNREFETDCRQFLNFLNNRLGNQRRVYSFPCLAAFADGQEMRKPADEKLEEFWIDFNLGSQSVTFYIDNAESALWEPVKLLKEAMVKFIIIENDRIKMFIVYLKQPIVISKREAKKIEIHFDRQLGILQASIQALGEDKQAPSFQTSVLVKLFSGLEKEDGEIPGRCEREAEDAEESTLLPELVDAEADRCLITRCFNVQTVPGVSKGSLEITNTEERSLENSKQDEPEQVTSEYDYPLDMQEPSIQNQASDLNNIKEDSAFARDREQDRRMPFNDRNHDLLESNEDSSLSTNERSWTQNHKRKSLRTYSQRKKQRVSSLRILPLSPIRSGHAPEKDEAELVPLWKGISRRNDSTLLKISETKLRGSSVLLTSGASTQKIGLEKPERRGSEPSSSTKKTRVTDGLHWREPRSPHPSSGPSSLEYLEVEENIPEIVNRESFMGNSSFKHKLENLGHREIPDGSVAALKQSRLEDAPGSPVVTDTSTPSQEDMPGSVNGSAFKTAFENFTRDLKRKFELELKQREIPFSLEKAKEAPACLIRLWNQIHTCRLDTLERFHSSVLRELSGLEKNLQTLKCLEKDALASLLFVLSLGRERTFSR</sequence>